<feature type="chain" id="PRO_0000042773" description="Ubiquitin-like protein NEDD8">
    <location>
        <begin position="1"/>
        <end position="76"/>
    </location>
</feature>
<feature type="propeptide" id="PRO_0000042774" evidence="2">
    <location>
        <begin position="77"/>
        <end position="81"/>
    </location>
</feature>
<feature type="region of interest" description="Interaction with UBE1C" evidence="2">
    <location>
        <begin position="70"/>
        <end position="72"/>
    </location>
</feature>
<feature type="site" description="Interaction with UBE1C" evidence="2">
    <location>
        <position position="8"/>
    </location>
</feature>
<feature type="site" description="Interaction with UBE1C" evidence="2">
    <location>
        <position position="44"/>
    </location>
</feature>
<feature type="modified residue" description="N6-acetyllysine" evidence="1">
    <location>
        <position position="48"/>
    </location>
</feature>
<feature type="cross-link" description="Glycyl lysine isopeptide (Gly-Lys) (interchain with K-? in acceptor proteins)" evidence="3">
    <location>
        <position position="76"/>
    </location>
</feature>
<gene>
    <name type="primary">Nedd8</name>
</gene>
<sequence length="81" mass="8972">MLIKVKTLTGKEIEIDIEPTDKVERIKERVEEKEGIPPQQQRLIYSGKQMNDEKTAADYKILGGSVLHLVLALRGGGGLGQ</sequence>
<comment type="function">
    <text evidence="2">Ubiquitin-like protein which plays an important role in cell cycle control and embryogenesis via its conjugation to a limited number of cellular proteins, such as cullins or p53/TP53. Attachment of NEDD8 to cullins is critical for the recruitment of E2 to the cullin-RING-based E3 ubiquitin-protein ligase complex, thus facilitating polyubiquitination and proteasomal degradation of cyclins and other regulatory proteins. Attachment of NEDD8 to p53/TP53 inhibits p53/TP53 transcriptional activity. Covalent attachment to its substrates requires prior activation by the E1 complex UBE1C-APPBP1 and linkage to the E2 enzyme UBE2M.</text>
</comment>
<comment type="subunit">
    <text evidence="2 4">Interacts with AHR; interaction is direct (By similarity). Interacts with NUB1; interaction is direct (By similarity). Interacts with ESR1 (PubMed:21808025).</text>
</comment>
<comment type="subcellular location">
    <subcellularLocation>
        <location evidence="2">Nucleus</location>
    </subcellularLocation>
    <text evidence="2">Mainly nuclear.</text>
</comment>
<comment type="tissue specificity">
    <text evidence="4">Expressed in the CA1 region of the hippocampus (at protein level).</text>
</comment>
<comment type="PTM">
    <text evidence="2">Cleavage of precursor form by UCHL3 or SENP8 is necessary for function.</text>
</comment>
<comment type="similarity">
    <text evidence="5">Belongs to the ubiquitin family.</text>
</comment>
<organism>
    <name type="scientific">Rattus norvegicus</name>
    <name type="common">Rat</name>
    <dbReference type="NCBI Taxonomy" id="10116"/>
    <lineage>
        <taxon>Eukaryota</taxon>
        <taxon>Metazoa</taxon>
        <taxon>Chordata</taxon>
        <taxon>Craniata</taxon>
        <taxon>Vertebrata</taxon>
        <taxon>Euteleostomi</taxon>
        <taxon>Mammalia</taxon>
        <taxon>Eutheria</taxon>
        <taxon>Euarchontoglires</taxon>
        <taxon>Glires</taxon>
        <taxon>Rodentia</taxon>
        <taxon>Myomorpha</taxon>
        <taxon>Muroidea</taxon>
        <taxon>Muridae</taxon>
        <taxon>Murinae</taxon>
        <taxon>Rattus</taxon>
    </lineage>
</organism>
<name>NEDD8_RAT</name>
<reference key="1">
    <citation type="submission" date="1998-09" db="EMBL/GenBank/DDBJ databases">
        <title>Isolation of a novel ubiquitin-like protein from the diabetic kidney.</title>
        <authorList>
            <person name="Page R.A."/>
        </authorList>
    </citation>
    <scope>NUCLEOTIDE SEQUENCE [MRNA]</scope>
    <source>
        <strain>GK</strain>
        <tissue>Kidney</tissue>
    </source>
</reference>
<reference key="2">
    <citation type="journal article" date="2004" name="Genome Res.">
        <title>The status, quality, and expansion of the NIH full-length cDNA project: the Mammalian Gene Collection (MGC).</title>
        <authorList>
            <consortium name="The MGC Project Team"/>
        </authorList>
    </citation>
    <scope>NUCLEOTIDE SEQUENCE [LARGE SCALE MRNA]</scope>
    <source>
        <tissue>Brain</tissue>
    </source>
</reference>
<reference key="3">
    <citation type="submission" date="2007-04" db="UniProtKB">
        <authorList>
            <person name="Lubec G."/>
            <person name="Diao W."/>
        </authorList>
    </citation>
    <scope>PROTEIN SEQUENCE OF 61-74</scope>
    <scope>IDENTIFICATION BY MASS SPECTROMETRY</scope>
    <source>
        <strain>Sprague-Dawley</strain>
        <tissue>Hippocampus</tissue>
    </source>
</reference>
<reference key="4">
    <citation type="journal article" date="2011" name="Proc. Natl. Acad. Sci. U.S.A.">
        <title>C terminus of Hsc70-interacting protein (CHIP)-mediated degradation of hippocampal estrogen receptor-alpha and the critical period hypothesis of estrogen neuroprotection.</title>
        <authorList>
            <person name="Zhang Q.G."/>
            <person name="Han D."/>
            <person name="Wang R.M."/>
            <person name="Dong Y."/>
            <person name="Yang F."/>
            <person name="Vadlamudi R.K."/>
            <person name="Brann D.W."/>
        </authorList>
    </citation>
    <scope>INTERACTION WITH ESR1</scope>
    <scope>TISSUE SPECIFICITY</scope>
</reference>
<protein>
    <recommendedName>
        <fullName>Ubiquitin-like protein NEDD8</fullName>
    </recommendedName>
    <alternativeName>
        <fullName>Neddylin</fullName>
    </alternativeName>
</protein>
<proteinExistence type="evidence at protein level"/>
<evidence type="ECO:0000250" key="1">
    <source>
        <dbReference type="UniProtKB" id="P29595"/>
    </source>
</evidence>
<evidence type="ECO:0000250" key="2">
    <source>
        <dbReference type="UniProtKB" id="Q15843"/>
    </source>
</evidence>
<evidence type="ECO:0000255" key="3">
    <source>
        <dbReference type="PROSITE-ProRule" id="PRU00214"/>
    </source>
</evidence>
<evidence type="ECO:0000269" key="4">
    <source>
    </source>
</evidence>
<evidence type="ECO:0000305" key="5"/>
<keyword id="KW-0007">Acetylation</keyword>
<keyword id="KW-0903">Direct protein sequencing</keyword>
<keyword id="KW-1017">Isopeptide bond</keyword>
<keyword id="KW-0539">Nucleus</keyword>
<keyword id="KW-1185">Reference proteome</keyword>
<keyword id="KW-0833">Ubl conjugation pathway</keyword>
<accession>Q71UE8</accession>
<dbReference type="EMBL" id="AF095740">
    <property type="protein sequence ID" value="AAC64189.1"/>
    <property type="molecule type" value="mRNA"/>
</dbReference>
<dbReference type="EMBL" id="BC084728">
    <property type="protein sequence ID" value="AAH84728.1"/>
    <property type="molecule type" value="mRNA"/>
</dbReference>
<dbReference type="RefSeq" id="NP_620233.1">
    <property type="nucleotide sequence ID" value="NM_138878.2"/>
</dbReference>
<dbReference type="BMRB" id="Q71UE8"/>
<dbReference type="SMR" id="Q71UE8"/>
<dbReference type="BioGRID" id="247523">
    <property type="interactions" value="2"/>
</dbReference>
<dbReference type="DIP" id="DIP-60385N"/>
<dbReference type="FunCoup" id="Q71UE8">
    <property type="interactions" value="3628"/>
</dbReference>
<dbReference type="IntAct" id="Q71UE8">
    <property type="interactions" value="2"/>
</dbReference>
<dbReference type="STRING" id="10116.ENSRNOP00000061284"/>
<dbReference type="iPTMnet" id="Q71UE8"/>
<dbReference type="PhosphoSitePlus" id="Q71UE8"/>
<dbReference type="jPOST" id="Q71UE8"/>
<dbReference type="PaxDb" id="10116-ENSRNOP00000061284"/>
<dbReference type="Ensembl" id="ENSRNOT00000064916.3">
    <property type="protein sequence ID" value="ENSRNOP00000061284.1"/>
    <property type="gene ID" value="ENSRNOG00000019895.7"/>
</dbReference>
<dbReference type="GeneID" id="25490"/>
<dbReference type="KEGG" id="rno:25490"/>
<dbReference type="UCSC" id="RGD:3158">
    <property type="organism name" value="rat"/>
</dbReference>
<dbReference type="AGR" id="RGD:3158"/>
<dbReference type="CTD" id="4738"/>
<dbReference type="RGD" id="3158">
    <property type="gene designation" value="Nedd8"/>
</dbReference>
<dbReference type="eggNOG" id="KOG0005">
    <property type="taxonomic scope" value="Eukaryota"/>
</dbReference>
<dbReference type="GeneTree" id="ENSGT00940000155856"/>
<dbReference type="HOGENOM" id="CLU_010412_6_4_1"/>
<dbReference type="InParanoid" id="Q71UE8"/>
<dbReference type="OMA" id="YAGKQMA"/>
<dbReference type="OrthoDB" id="67473at9989"/>
<dbReference type="PhylomeDB" id="Q71UE8"/>
<dbReference type="TreeFam" id="TF300072"/>
<dbReference type="Reactome" id="R-RNO-2173789">
    <property type="pathway name" value="TGF-beta receptor signaling activates SMADs"/>
</dbReference>
<dbReference type="Reactome" id="R-RNO-5689603">
    <property type="pathway name" value="UCH proteinases"/>
</dbReference>
<dbReference type="Reactome" id="R-RNO-8856825">
    <property type="pathway name" value="Cargo recognition for clathrin-mediated endocytosis"/>
</dbReference>
<dbReference type="Reactome" id="R-RNO-8951664">
    <property type="pathway name" value="Neddylation"/>
</dbReference>
<dbReference type="Reactome" id="R-RNO-917937">
    <property type="pathway name" value="Iron uptake and transport"/>
</dbReference>
<dbReference type="PRO" id="PR:Q71UE8"/>
<dbReference type="Proteomes" id="UP000002494">
    <property type="component" value="Chromosome 15"/>
</dbReference>
<dbReference type="Bgee" id="ENSRNOG00000019895">
    <property type="expression patterns" value="Expressed in Ammon's horn and 20 other cell types or tissues"/>
</dbReference>
<dbReference type="ExpressionAtlas" id="Q71UE8">
    <property type="expression patterns" value="baseline and differential"/>
</dbReference>
<dbReference type="GO" id="GO:0005737">
    <property type="term" value="C:cytoplasm"/>
    <property type="evidence" value="ECO:0000318"/>
    <property type="project" value="GO_Central"/>
</dbReference>
<dbReference type="GO" id="GO:0005829">
    <property type="term" value="C:cytosol"/>
    <property type="evidence" value="ECO:0007669"/>
    <property type="project" value="Ensembl"/>
</dbReference>
<dbReference type="GO" id="GO:0098978">
    <property type="term" value="C:glutamatergic synapse"/>
    <property type="evidence" value="ECO:0000266"/>
    <property type="project" value="RGD"/>
</dbReference>
<dbReference type="GO" id="GO:0005654">
    <property type="term" value="C:nucleoplasm"/>
    <property type="evidence" value="ECO:0007669"/>
    <property type="project" value="Ensembl"/>
</dbReference>
<dbReference type="GO" id="GO:0005634">
    <property type="term" value="C:nucleus"/>
    <property type="evidence" value="ECO:0000266"/>
    <property type="project" value="RGD"/>
</dbReference>
<dbReference type="GO" id="GO:0098794">
    <property type="term" value="C:postsynapse"/>
    <property type="evidence" value="ECO:0000314"/>
    <property type="project" value="SynGO"/>
</dbReference>
<dbReference type="GO" id="GO:0031386">
    <property type="term" value="F:protein tag activity"/>
    <property type="evidence" value="ECO:0000318"/>
    <property type="project" value="GO_Central"/>
</dbReference>
<dbReference type="GO" id="GO:0031625">
    <property type="term" value="F:ubiquitin protein ligase binding"/>
    <property type="evidence" value="ECO:0000266"/>
    <property type="project" value="RGD"/>
</dbReference>
<dbReference type="GO" id="GO:0072757">
    <property type="term" value="P:cellular response to camptothecin"/>
    <property type="evidence" value="ECO:0000314"/>
    <property type="project" value="RGD"/>
</dbReference>
<dbReference type="GO" id="GO:0019941">
    <property type="term" value="P:modification-dependent protein catabolic process"/>
    <property type="evidence" value="ECO:0000318"/>
    <property type="project" value="GO_Central"/>
</dbReference>
<dbReference type="GO" id="GO:0008104">
    <property type="term" value="P:protein localization"/>
    <property type="evidence" value="ECO:0000266"/>
    <property type="project" value="RGD"/>
</dbReference>
<dbReference type="GO" id="GO:0045116">
    <property type="term" value="P:protein neddylation"/>
    <property type="evidence" value="ECO:0000314"/>
    <property type="project" value="RGD"/>
</dbReference>
<dbReference type="GO" id="GO:0150052">
    <property type="term" value="P:regulation of postsynapse assembly"/>
    <property type="evidence" value="ECO:0000266"/>
    <property type="project" value="RGD"/>
</dbReference>
<dbReference type="GO" id="GO:0030162">
    <property type="term" value="P:regulation of proteolysis"/>
    <property type="evidence" value="ECO:0000318"/>
    <property type="project" value="GO_Central"/>
</dbReference>
<dbReference type="GO" id="GO:0006357">
    <property type="term" value="P:regulation of transcription by RNA polymerase II"/>
    <property type="evidence" value="ECO:0000266"/>
    <property type="project" value="RGD"/>
</dbReference>
<dbReference type="CDD" id="cd01806">
    <property type="entry name" value="Ubl_NEDD8"/>
    <property type="match status" value="1"/>
</dbReference>
<dbReference type="FunFam" id="3.10.20.90:FF:000023">
    <property type="entry name" value="NEDD8 protein"/>
    <property type="match status" value="1"/>
</dbReference>
<dbReference type="Gene3D" id="3.10.20.90">
    <property type="entry name" value="Phosphatidylinositol 3-kinase Catalytic Subunit, Chain A, domain 1"/>
    <property type="match status" value="1"/>
</dbReference>
<dbReference type="InterPro" id="IPR038738">
    <property type="entry name" value="Nedd8-like"/>
</dbReference>
<dbReference type="InterPro" id="IPR000626">
    <property type="entry name" value="Ubiquitin-like_dom"/>
</dbReference>
<dbReference type="InterPro" id="IPR029071">
    <property type="entry name" value="Ubiquitin-like_domsf"/>
</dbReference>
<dbReference type="InterPro" id="IPR019954">
    <property type="entry name" value="Ubiquitin_CS"/>
</dbReference>
<dbReference type="InterPro" id="IPR019956">
    <property type="entry name" value="Ubiquitin_dom"/>
</dbReference>
<dbReference type="InterPro" id="IPR050158">
    <property type="entry name" value="Ubiquitin_ubiquitin-like"/>
</dbReference>
<dbReference type="PANTHER" id="PTHR10666">
    <property type="entry name" value="UBIQUITIN"/>
    <property type="match status" value="1"/>
</dbReference>
<dbReference type="Pfam" id="PF00240">
    <property type="entry name" value="ubiquitin"/>
    <property type="match status" value="1"/>
</dbReference>
<dbReference type="PRINTS" id="PR00348">
    <property type="entry name" value="UBIQUITIN"/>
</dbReference>
<dbReference type="SMART" id="SM00213">
    <property type="entry name" value="UBQ"/>
    <property type="match status" value="1"/>
</dbReference>
<dbReference type="SUPFAM" id="SSF54236">
    <property type="entry name" value="Ubiquitin-like"/>
    <property type="match status" value="1"/>
</dbReference>
<dbReference type="PROSITE" id="PS00299">
    <property type="entry name" value="UBIQUITIN_1"/>
    <property type="match status" value="1"/>
</dbReference>
<dbReference type="PROSITE" id="PS50053">
    <property type="entry name" value="UBIQUITIN_2"/>
    <property type="match status" value="1"/>
</dbReference>